<feature type="chain" id="PRO_0000410873" description="Two pore potassium channel b">
    <location>
        <begin position="1"/>
        <end position="349"/>
    </location>
</feature>
<feature type="topological domain" description="Cytoplasmic" evidence="1">
    <location>
        <begin position="1"/>
        <end position="66"/>
    </location>
</feature>
<feature type="transmembrane region" description="Helical" evidence="1">
    <location>
        <begin position="67"/>
        <end position="87"/>
    </location>
</feature>
<feature type="intramembrane region" description="Pore-forming; Name=Pore-forming 1" evidence="1">
    <location>
        <begin position="100"/>
        <end position="119"/>
    </location>
</feature>
<feature type="transmembrane region" description="Helical" evidence="1">
    <location>
        <begin position="123"/>
        <end position="143"/>
    </location>
</feature>
<feature type="topological domain" description="Cytoplasmic" evidence="1">
    <location>
        <begin position="144"/>
        <end position="180"/>
    </location>
</feature>
<feature type="transmembrane region" description="Helical" evidence="1">
    <location>
        <begin position="181"/>
        <end position="201"/>
    </location>
</feature>
<feature type="intramembrane region" description="Pore-forming; Name=Pore-forming 2" evidence="1">
    <location>
        <begin position="208"/>
        <end position="227"/>
    </location>
</feature>
<feature type="transmembrane region" description="Helical" evidence="1">
    <location>
        <begin position="234"/>
        <end position="254"/>
    </location>
</feature>
<feature type="topological domain" description="Cytoplasmic" evidence="1">
    <location>
        <begin position="255"/>
        <end position="349"/>
    </location>
</feature>
<feature type="domain" description="EF-hand 1">
    <location>
        <begin position="271"/>
        <end position="306"/>
    </location>
</feature>
<feature type="domain" description="EF-hand 2">
    <location>
        <begin position="310"/>
        <end position="345"/>
    </location>
</feature>
<feature type="region of interest" description="Disordered" evidence="3">
    <location>
        <begin position="1"/>
        <end position="53"/>
    </location>
</feature>
<feature type="region of interest" description="Disordered" evidence="3">
    <location>
        <begin position="326"/>
        <end position="349"/>
    </location>
</feature>
<feature type="binding site" evidence="2">
    <location>
        <position position="284"/>
    </location>
    <ligand>
        <name>Ca(2+)</name>
        <dbReference type="ChEBI" id="CHEBI:29108"/>
        <label>1</label>
    </ligand>
</feature>
<feature type="binding site" evidence="2">
    <location>
        <position position="286"/>
    </location>
    <ligand>
        <name>Ca(2+)</name>
        <dbReference type="ChEBI" id="CHEBI:29108"/>
        <label>1</label>
    </ligand>
</feature>
<feature type="binding site" evidence="2">
    <location>
        <position position="288"/>
    </location>
    <ligand>
        <name>Ca(2+)</name>
        <dbReference type="ChEBI" id="CHEBI:29108"/>
        <label>1</label>
    </ligand>
</feature>
<feature type="binding site" evidence="2">
    <location>
        <position position="290"/>
    </location>
    <ligand>
        <name>Ca(2+)</name>
        <dbReference type="ChEBI" id="CHEBI:29108"/>
        <label>1</label>
    </ligand>
</feature>
<feature type="binding site" evidence="2">
    <location>
        <position position="295"/>
    </location>
    <ligand>
        <name>Ca(2+)</name>
        <dbReference type="ChEBI" id="CHEBI:29108"/>
        <label>1</label>
    </ligand>
</feature>
<feature type="binding site" evidence="2">
    <location>
        <position position="323"/>
    </location>
    <ligand>
        <name>Ca(2+)</name>
        <dbReference type="ChEBI" id="CHEBI:29108"/>
        <label>2</label>
    </ligand>
</feature>
<feature type="binding site" evidence="2">
    <location>
        <position position="325"/>
    </location>
    <ligand>
        <name>Ca(2+)</name>
        <dbReference type="ChEBI" id="CHEBI:29108"/>
        <label>2</label>
    </ligand>
</feature>
<feature type="binding site" evidence="2">
    <location>
        <position position="327"/>
    </location>
    <ligand>
        <name>Ca(2+)</name>
        <dbReference type="ChEBI" id="CHEBI:29108"/>
        <label>2</label>
    </ligand>
</feature>
<feature type="binding site" evidence="2">
    <location>
        <position position="329"/>
    </location>
    <ligand>
        <name>Ca(2+)</name>
        <dbReference type="ChEBI" id="CHEBI:29108"/>
        <label>2</label>
    </ligand>
</feature>
<feature type="binding site" evidence="2">
    <location>
        <position position="334"/>
    </location>
    <ligand>
        <name>Ca(2+)</name>
        <dbReference type="ChEBI" id="CHEBI:29108"/>
        <label>2</label>
    </ligand>
</feature>
<feature type="mutagenesis site" description="No effect on targeting to protein storage vacuole." evidence="4">
    <original>D</original>
    <variation>E</variation>
    <location>
        <position position="295"/>
    </location>
</feature>
<comment type="function">
    <text evidence="4">Highly selective inward-rectifying potassium channel that is specifically located in the tonoplast of protein storage vacuoles. Functions independently of the voltage difference across the membrane.</text>
</comment>
<comment type="subunit">
    <text evidence="5">Homodimer.</text>
</comment>
<comment type="subcellular location">
    <subcellularLocation>
        <location evidence="4">Vacuole membrane</location>
        <topology evidence="4">Multi-pass membrane protein</topology>
    </subcellularLocation>
    <text>Tonoplast of protein storage vacuoles.</text>
</comment>
<comment type="domain">
    <text>Each of the two pore-forming region (also called P-domain or P-loop) is enclosed by two transmembrane segments (2P/4TM) and contains the GYGD signature motif which seems to be involved in potassium selectivity.</text>
</comment>
<comment type="similarity">
    <text evidence="5">Belongs to the two pore domain potassium channel (TC 1.A.1.7) family.</text>
</comment>
<keyword id="KW-0106">Calcium</keyword>
<keyword id="KW-0407">Ion channel</keyword>
<keyword id="KW-0406">Ion transport</keyword>
<keyword id="KW-0472">Membrane</keyword>
<keyword id="KW-0479">Metal-binding</keyword>
<keyword id="KW-0630">Potassium</keyword>
<keyword id="KW-0631">Potassium channel</keyword>
<keyword id="KW-0633">Potassium transport</keyword>
<keyword id="KW-1185">Reference proteome</keyword>
<keyword id="KW-0677">Repeat</keyword>
<keyword id="KW-0812">Transmembrane</keyword>
<keyword id="KW-1133">Transmembrane helix</keyword>
<keyword id="KW-0813">Transport</keyword>
<keyword id="KW-0926">Vacuole</keyword>
<reference key="1">
    <citation type="journal article" date="2005" name="Nature">
        <title>The map-based sequence of the rice genome.</title>
        <authorList>
            <consortium name="International rice genome sequencing project (IRGSP)"/>
        </authorList>
    </citation>
    <scope>NUCLEOTIDE SEQUENCE [LARGE SCALE GENOMIC DNA]</scope>
    <source>
        <strain>cv. Nipponbare</strain>
    </source>
</reference>
<reference key="2">
    <citation type="journal article" date="2008" name="Nucleic Acids Res.">
        <title>The rice annotation project database (RAP-DB): 2008 update.</title>
        <authorList>
            <consortium name="The rice annotation project (RAP)"/>
        </authorList>
    </citation>
    <scope>GENOME REANNOTATION</scope>
    <source>
        <strain>cv. Nipponbare</strain>
    </source>
</reference>
<reference key="3">
    <citation type="journal article" date="2013" name="Rice">
        <title>Improvement of the Oryza sativa Nipponbare reference genome using next generation sequence and optical map data.</title>
        <authorList>
            <person name="Kawahara Y."/>
            <person name="de la Bastide M."/>
            <person name="Hamilton J.P."/>
            <person name="Kanamori H."/>
            <person name="McCombie W.R."/>
            <person name="Ouyang S."/>
            <person name="Schwartz D.C."/>
            <person name="Tanaka T."/>
            <person name="Wu J."/>
            <person name="Zhou S."/>
            <person name="Childs K.L."/>
            <person name="Davidson R.M."/>
            <person name="Lin H."/>
            <person name="Quesada-Ocampo L."/>
            <person name="Vaillancourt B."/>
            <person name="Sakai H."/>
            <person name="Lee S.S."/>
            <person name="Kim J."/>
            <person name="Numa H."/>
            <person name="Itoh T."/>
            <person name="Buell C.R."/>
            <person name="Matsumoto T."/>
        </authorList>
    </citation>
    <scope>GENOME REANNOTATION</scope>
    <source>
        <strain>cv. Nipponbare</strain>
    </source>
</reference>
<reference key="4">
    <citation type="journal article" date="2005" name="PLoS Biol.">
        <title>The genomes of Oryza sativa: a history of duplications.</title>
        <authorList>
            <person name="Yu J."/>
            <person name="Wang J."/>
            <person name="Lin W."/>
            <person name="Li S."/>
            <person name="Li H."/>
            <person name="Zhou J."/>
            <person name="Ni P."/>
            <person name="Dong W."/>
            <person name="Hu S."/>
            <person name="Zeng C."/>
            <person name="Zhang J."/>
            <person name="Zhang Y."/>
            <person name="Li R."/>
            <person name="Xu Z."/>
            <person name="Li S."/>
            <person name="Li X."/>
            <person name="Zheng H."/>
            <person name="Cong L."/>
            <person name="Lin L."/>
            <person name="Yin J."/>
            <person name="Geng J."/>
            <person name="Li G."/>
            <person name="Shi J."/>
            <person name="Liu J."/>
            <person name="Lv H."/>
            <person name="Li J."/>
            <person name="Wang J."/>
            <person name="Deng Y."/>
            <person name="Ran L."/>
            <person name="Shi X."/>
            <person name="Wang X."/>
            <person name="Wu Q."/>
            <person name="Li C."/>
            <person name="Ren X."/>
            <person name="Wang J."/>
            <person name="Wang X."/>
            <person name="Li D."/>
            <person name="Liu D."/>
            <person name="Zhang X."/>
            <person name="Ji Z."/>
            <person name="Zhao W."/>
            <person name="Sun Y."/>
            <person name="Zhang Z."/>
            <person name="Bao J."/>
            <person name="Han Y."/>
            <person name="Dong L."/>
            <person name="Ji J."/>
            <person name="Chen P."/>
            <person name="Wu S."/>
            <person name="Liu J."/>
            <person name="Xiao Y."/>
            <person name="Bu D."/>
            <person name="Tan J."/>
            <person name="Yang L."/>
            <person name="Ye C."/>
            <person name="Zhang J."/>
            <person name="Xu J."/>
            <person name="Zhou Y."/>
            <person name="Yu Y."/>
            <person name="Zhang B."/>
            <person name="Zhuang S."/>
            <person name="Wei H."/>
            <person name="Liu B."/>
            <person name="Lei M."/>
            <person name="Yu H."/>
            <person name="Li Y."/>
            <person name="Xu H."/>
            <person name="Wei S."/>
            <person name="He X."/>
            <person name="Fang L."/>
            <person name="Zhang Z."/>
            <person name="Zhang Y."/>
            <person name="Huang X."/>
            <person name="Su Z."/>
            <person name="Tong W."/>
            <person name="Li J."/>
            <person name="Tong Z."/>
            <person name="Li S."/>
            <person name="Ye J."/>
            <person name="Wang L."/>
            <person name="Fang L."/>
            <person name="Lei T."/>
            <person name="Chen C.-S."/>
            <person name="Chen H.-C."/>
            <person name="Xu Z."/>
            <person name="Li H."/>
            <person name="Huang H."/>
            <person name="Zhang F."/>
            <person name="Xu H."/>
            <person name="Li N."/>
            <person name="Zhao C."/>
            <person name="Li S."/>
            <person name="Dong L."/>
            <person name="Huang Y."/>
            <person name="Li L."/>
            <person name="Xi Y."/>
            <person name="Qi Q."/>
            <person name="Li W."/>
            <person name="Zhang B."/>
            <person name="Hu W."/>
            <person name="Zhang Y."/>
            <person name="Tian X."/>
            <person name="Jiao Y."/>
            <person name="Liang X."/>
            <person name="Jin J."/>
            <person name="Gao L."/>
            <person name="Zheng W."/>
            <person name="Hao B."/>
            <person name="Liu S.-M."/>
            <person name="Wang W."/>
            <person name="Yuan L."/>
            <person name="Cao M."/>
            <person name="McDermott J."/>
            <person name="Samudrala R."/>
            <person name="Wang J."/>
            <person name="Wong G.K.-S."/>
            <person name="Yang H."/>
        </authorList>
    </citation>
    <scope>NUCLEOTIDE SEQUENCE [LARGE SCALE GENOMIC DNA]</scope>
    <source>
        <strain>cv. Nipponbare</strain>
    </source>
</reference>
<reference key="5">
    <citation type="journal article" date="2003" name="Science">
        <title>Collection, mapping, and annotation of over 28,000 cDNA clones from japonica rice.</title>
        <authorList>
            <consortium name="The rice full-length cDNA consortium"/>
        </authorList>
    </citation>
    <scope>NUCLEOTIDE SEQUENCE [LARGE SCALE MRNA]</scope>
    <source>
        <strain>cv. Nipponbare</strain>
    </source>
</reference>
<reference key="6">
    <citation type="journal article" date="2011" name="Plant Cell">
        <title>Rice two-pore K+ channels are expressed in different types of vacuoles.</title>
        <authorList>
            <person name="Isayenkov S."/>
            <person name="Isner J.C."/>
            <person name="Maathuis F.J."/>
        </authorList>
    </citation>
    <scope>FUNCTION</scope>
    <scope>SUBCELLULAR LOCATION</scope>
    <scope>MUTAGENESIS OF ASP-295</scope>
</reference>
<dbReference type="EMBL" id="AP003759">
    <property type="protein sequence ID" value="BAC06932.1"/>
    <property type="molecule type" value="Genomic_DNA"/>
</dbReference>
<dbReference type="EMBL" id="AP004342">
    <property type="protein sequence ID" value="BAD30634.1"/>
    <property type="molecule type" value="Genomic_DNA"/>
</dbReference>
<dbReference type="EMBL" id="AP008213">
    <property type="protein sequence ID" value="BAF20633.1"/>
    <property type="molecule type" value="Genomic_DNA"/>
</dbReference>
<dbReference type="EMBL" id="AP014963">
    <property type="protein sequence ID" value="BAS99736.1"/>
    <property type="molecule type" value="Genomic_DNA"/>
</dbReference>
<dbReference type="EMBL" id="CM000144">
    <property type="protein sequence ID" value="EAZ38441.1"/>
    <property type="molecule type" value="Genomic_DNA"/>
</dbReference>
<dbReference type="EMBL" id="AK109604">
    <property type="protein sequence ID" value="BAG98817.1"/>
    <property type="molecule type" value="mRNA"/>
</dbReference>
<dbReference type="SMR" id="Q8LIN5"/>
<dbReference type="FunCoup" id="Q8LIN5">
    <property type="interactions" value="1965"/>
</dbReference>
<dbReference type="STRING" id="39947.Q8LIN5"/>
<dbReference type="PaxDb" id="39947-Q8LIN5"/>
<dbReference type="EnsemblPlants" id="Os07t0108800-01">
    <property type="protein sequence ID" value="Os07t0108800-01"/>
    <property type="gene ID" value="Os07g0108800"/>
</dbReference>
<dbReference type="Gramene" id="Os07t0108800-01">
    <property type="protein sequence ID" value="Os07t0108800-01"/>
    <property type="gene ID" value="Os07g0108800"/>
</dbReference>
<dbReference type="KEGG" id="dosa:Os07g0108800"/>
<dbReference type="eggNOG" id="KOG1418">
    <property type="taxonomic scope" value="Eukaryota"/>
</dbReference>
<dbReference type="HOGENOM" id="CLU_033675_0_1_1"/>
<dbReference type="InParanoid" id="Q8LIN5"/>
<dbReference type="OMA" id="KILACIY"/>
<dbReference type="Proteomes" id="UP000000763">
    <property type="component" value="Chromosome 7"/>
</dbReference>
<dbReference type="Proteomes" id="UP000007752">
    <property type="component" value="Chromosome 7"/>
</dbReference>
<dbReference type="Proteomes" id="UP000059680">
    <property type="component" value="Chromosome 7"/>
</dbReference>
<dbReference type="GO" id="GO:0009705">
    <property type="term" value="C:plant-type vacuole membrane"/>
    <property type="evidence" value="ECO:0000314"/>
    <property type="project" value="UniProtKB"/>
</dbReference>
<dbReference type="GO" id="GO:0005886">
    <property type="term" value="C:plasma membrane"/>
    <property type="evidence" value="ECO:0000318"/>
    <property type="project" value="GO_Central"/>
</dbReference>
<dbReference type="GO" id="GO:0005242">
    <property type="term" value="F:inward rectifier potassium channel activity"/>
    <property type="evidence" value="ECO:0000314"/>
    <property type="project" value="UniProtKB"/>
</dbReference>
<dbReference type="GO" id="GO:0046872">
    <property type="term" value="F:metal ion binding"/>
    <property type="evidence" value="ECO:0007669"/>
    <property type="project" value="UniProtKB-KW"/>
</dbReference>
<dbReference type="GO" id="GO:0015271">
    <property type="term" value="F:outward rectifier potassium channel activity"/>
    <property type="evidence" value="ECO:0000318"/>
    <property type="project" value="GO_Central"/>
</dbReference>
<dbReference type="GO" id="GO:0022841">
    <property type="term" value="F:potassium ion leak channel activity"/>
    <property type="evidence" value="ECO:0000318"/>
    <property type="project" value="GO_Central"/>
</dbReference>
<dbReference type="GO" id="GO:0030007">
    <property type="term" value="P:intracellular potassium ion homeostasis"/>
    <property type="evidence" value="ECO:0000305"/>
    <property type="project" value="UniProtKB"/>
</dbReference>
<dbReference type="GO" id="GO:0071805">
    <property type="term" value="P:potassium ion transmembrane transport"/>
    <property type="evidence" value="ECO:0000314"/>
    <property type="project" value="UniProtKB"/>
</dbReference>
<dbReference type="FunFam" id="1.10.287.70:FF:000127">
    <property type="entry name" value="Calcium-activated outward-rectifying potassium channel 1"/>
    <property type="match status" value="1"/>
</dbReference>
<dbReference type="FunFam" id="1.10.287.70:FF:000128">
    <property type="entry name" value="Two-pore potassium channel 1"/>
    <property type="match status" value="1"/>
</dbReference>
<dbReference type="Gene3D" id="1.10.287.70">
    <property type="match status" value="2"/>
</dbReference>
<dbReference type="InterPro" id="IPR003280">
    <property type="entry name" value="2pore_dom_K_chnl"/>
</dbReference>
<dbReference type="InterPro" id="IPR011992">
    <property type="entry name" value="EF-hand-dom_pair"/>
</dbReference>
<dbReference type="InterPro" id="IPR018247">
    <property type="entry name" value="EF_Hand_1_Ca_BS"/>
</dbReference>
<dbReference type="InterPro" id="IPR013099">
    <property type="entry name" value="K_chnl_dom"/>
</dbReference>
<dbReference type="PANTHER" id="PTHR11003:SF291">
    <property type="entry name" value="IP11374P"/>
    <property type="match status" value="1"/>
</dbReference>
<dbReference type="PANTHER" id="PTHR11003">
    <property type="entry name" value="POTASSIUM CHANNEL, SUBFAMILY K"/>
    <property type="match status" value="1"/>
</dbReference>
<dbReference type="Pfam" id="PF07885">
    <property type="entry name" value="Ion_trans_2"/>
    <property type="match status" value="2"/>
</dbReference>
<dbReference type="PRINTS" id="PR01333">
    <property type="entry name" value="2POREKCHANEL"/>
</dbReference>
<dbReference type="SUPFAM" id="SSF47473">
    <property type="entry name" value="EF-hand"/>
    <property type="match status" value="1"/>
</dbReference>
<dbReference type="SUPFAM" id="SSF81324">
    <property type="entry name" value="Voltage-gated potassium channels"/>
    <property type="match status" value="2"/>
</dbReference>
<dbReference type="PROSITE" id="PS00018">
    <property type="entry name" value="EF_HAND_1"/>
    <property type="match status" value="2"/>
</dbReference>
<gene>
    <name type="primary">TPKB</name>
    <name type="synonym">KCO2</name>
    <name type="ordered locus">Os07g0108800</name>
    <name type="ordered locus">LOC_Os07g01810</name>
    <name type="ORF">OJ1567_G09.108</name>
    <name type="ORF">OsJ_22819</name>
    <name type="ORF">P0585H11.123</name>
</gene>
<organism>
    <name type="scientific">Oryza sativa subsp. japonica</name>
    <name type="common">Rice</name>
    <dbReference type="NCBI Taxonomy" id="39947"/>
    <lineage>
        <taxon>Eukaryota</taxon>
        <taxon>Viridiplantae</taxon>
        <taxon>Streptophyta</taxon>
        <taxon>Embryophyta</taxon>
        <taxon>Tracheophyta</taxon>
        <taxon>Spermatophyta</taxon>
        <taxon>Magnoliopsida</taxon>
        <taxon>Liliopsida</taxon>
        <taxon>Poales</taxon>
        <taxon>Poaceae</taxon>
        <taxon>BOP clade</taxon>
        <taxon>Oryzoideae</taxon>
        <taxon>Oryzeae</taxon>
        <taxon>Oryzinae</taxon>
        <taxon>Oryza</taxon>
        <taxon>Oryza sativa</taxon>
    </lineage>
</organism>
<protein>
    <recommendedName>
        <fullName>Two pore potassium channel b</fullName>
        <shortName>Two K(+) channel b</shortName>
    </recommendedName>
    <alternativeName>
        <fullName>Calcium-activated outward-rectifying potassium channel 2</fullName>
        <shortName>OsKCO2</shortName>
    </alternativeName>
</protein>
<evidence type="ECO:0000255" key="1"/>
<evidence type="ECO:0000255" key="2">
    <source>
        <dbReference type="PROSITE-ProRule" id="PRU10142"/>
    </source>
</evidence>
<evidence type="ECO:0000256" key="3">
    <source>
        <dbReference type="SAM" id="MobiDB-lite"/>
    </source>
</evidence>
<evidence type="ECO:0000269" key="4">
    <source>
    </source>
</evidence>
<evidence type="ECO:0000305" key="5"/>
<accession>Q8LIN5</accession>
<accession>A0A0P0X1G6</accession>
<name>KCO2_ORYSJ</name>
<sequence>MAALDQQPLLHDGGDQKPPPEGAARRFRRCRTAPSSEPPPTDKDNSSAADAPPKTLFTGGGRPSFRLVGLLLVAYLLLGTIAFYLAMDHMSGTRTTRALDALYFCVVTMTTVGYGDLVPASDAAKLLACAFVFAGVAVVGTFLSKAADYLVEKQEALLFRALHSHTMVRAMEMNKVRYKLYTAGLLLVAAVASGTVVLWKVEGMRAVDAFYCVCATVTTLGYGDRSFSSEGGRAFAVAWITVSTVVVALFFLYAAELYTERRQRELARWVLRRRTTNMDLEAADLDGDHRVGAADFVLYKLKELGKISQEDISEFLDEFDNLDADHSGTLSPADLAAAQPTPDPPPSLR</sequence>
<proteinExistence type="evidence at protein level"/>